<reference key="1">
    <citation type="journal article" date="2000" name="DNA Res.">
        <title>Structural analysis of Arabidopsis thaliana chromosome 5. X. Sequence features of the regions of 3,076,755 bp covered by sixty P1 and TAC clones.</title>
        <authorList>
            <person name="Sato S."/>
            <person name="Nakamura Y."/>
            <person name="Kaneko T."/>
            <person name="Katoh T."/>
            <person name="Asamizu E."/>
            <person name="Kotani H."/>
            <person name="Tabata S."/>
        </authorList>
    </citation>
    <scope>NUCLEOTIDE SEQUENCE [LARGE SCALE GENOMIC DNA]</scope>
    <source>
        <strain>cv. Columbia</strain>
    </source>
</reference>
<reference key="2">
    <citation type="journal article" date="2017" name="Plant J.">
        <title>Araport11: a complete reannotation of the Arabidopsis thaliana reference genome.</title>
        <authorList>
            <person name="Cheng C.Y."/>
            <person name="Krishnakumar V."/>
            <person name="Chan A.P."/>
            <person name="Thibaud-Nissen F."/>
            <person name="Schobel S."/>
            <person name="Town C.D."/>
        </authorList>
    </citation>
    <scope>GENOME REANNOTATION</scope>
    <source>
        <strain>cv. Columbia</strain>
    </source>
</reference>
<reference key="3">
    <citation type="journal article" date="2003" name="Science">
        <title>Empirical analysis of transcriptional activity in the Arabidopsis genome.</title>
        <authorList>
            <person name="Yamada K."/>
            <person name="Lim J."/>
            <person name="Dale J.M."/>
            <person name="Chen H."/>
            <person name="Shinn P."/>
            <person name="Palm C.J."/>
            <person name="Southwick A.M."/>
            <person name="Wu H.C."/>
            <person name="Kim C.J."/>
            <person name="Nguyen M."/>
            <person name="Pham P.K."/>
            <person name="Cheuk R.F."/>
            <person name="Karlin-Newmann G."/>
            <person name="Liu S.X."/>
            <person name="Lam B."/>
            <person name="Sakano H."/>
            <person name="Wu T."/>
            <person name="Yu G."/>
            <person name="Miranda M."/>
            <person name="Quach H.L."/>
            <person name="Tripp M."/>
            <person name="Chang C.H."/>
            <person name="Lee J.M."/>
            <person name="Toriumi M.J."/>
            <person name="Chan M.M."/>
            <person name="Tang C.C."/>
            <person name="Onodera C.S."/>
            <person name="Deng J.M."/>
            <person name="Akiyama K."/>
            <person name="Ansari Y."/>
            <person name="Arakawa T."/>
            <person name="Banh J."/>
            <person name="Banno F."/>
            <person name="Bowser L."/>
            <person name="Brooks S.Y."/>
            <person name="Carninci P."/>
            <person name="Chao Q."/>
            <person name="Choy N."/>
            <person name="Enju A."/>
            <person name="Goldsmith A.D."/>
            <person name="Gurjal M."/>
            <person name="Hansen N.F."/>
            <person name="Hayashizaki Y."/>
            <person name="Johnson-Hopson C."/>
            <person name="Hsuan V.W."/>
            <person name="Iida K."/>
            <person name="Karnes M."/>
            <person name="Khan S."/>
            <person name="Koesema E."/>
            <person name="Ishida J."/>
            <person name="Jiang P.X."/>
            <person name="Jones T."/>
            <person name="Kawai J."/>
            <person name="Kamiya A."/>
            <person name="Meyers C."/>
            <person name="Nakajima M."/>
            <person name="Narusaka M."/>
            <person name="Seki M."/>
            <person name="Sakurai T."/>
            <person name="Satou M."/>
            <person name="Tamse R."/>
            <person name="Vaysberg M."/>
            <person name="Wallender E.K."/>
            <person name="Wong C."/>
            <person name="Yamamura Y."/>
            <person name="Yuan S."/>
            <person name="Shinozaki K."/>
            <person name="Davis R.W."/>
            <person name="Theologis A."/>
            <person name="Ecker J.R."/>
        </authorList>
    </citation>
    <scope>NUCLEOTIDE SEQUENCE [LARGE SCALE MRNA]</scope>
    <source>
        <strain>cv. Columbia</strain>
    </source>
</reference>
<reference key="4">
    <citation type="journal article" date="2006" name="Plant Cell">
        <title>Arabidopsis NRP1 and NRP2 encode histone chaperones and are required for maintaining postembryonic root growth.</title>
        <authorList>
            <person name="Zhu Y."/>
            <person name="Dong A."/>
            <person name="Meyer D."/>
            <person name="Pichon O."/>
            <person name="Renou J.P."/>
            <person name="Cao K."/>
            <person name="Shen W.H."/>
        </authorList>
    </citation>
    <scope>TISSUE SPECIFICITY</scope>
</reference>
<reference key="5">
    <citation type="journal article" date="2007" name="Mol. Cell. Proteomics">
        <title>Multidimensional protein identification technology (MudPIT) analysis of ubiquitinated proteins in plants.</title>
        <authorList>
            <person name="Maor R."/>
            <person name="Jones A."/>
            <person name="Nuehse T.S."/>
            <person name="Studholme D.J."/>
            <person name="Peck S.C."/>
            <person name="Shirasu K."/>
        </authorList>
    </citation>
    <scope>IDENTIFICATION BY MASS SPECTROMETRY [LARGE SCALE ANALYSIS]</scope>
    <source>
        <strain>cv. Landsberg erecta</strain>
    </source>
</reference>
<reference key="6">
    <citation type="journal article" date="2009" name="Mol. Plant">
        <title>A truncated Arabidopsis NUCLEOSOME ASSEMBLY PROTEIN 1, AtNAP1;3T, alters plant growth responses to abscisic acid and salt in the Atnap1;3-2 mutant.</title>
        <authorList>
            <person name="Liu Z.Q."/>
            <person name="Gao J."/>
            <person name="Dong A.W."/>
            <person name="Shen W.H."/>
        </authorList>
    </citation>
    <scope>DISRUPTION PHENOTYPE</scope>
    <scope>FUNCTION</scope>
</reference>
<reference key="7">
    <citation type="journal article" date="2009" name="Plant J.">
        <title>Molecular and reverse genetic characterization of NUCLEOSOME ASSEMBLY PROTEIN1 (NAP1) genes unravels their function in transcription and nucleotide excision repair in Arabidopsis thaliana.</title>
        <authorList>
            <person name="Liu Z."/>
            <person name="Zhu Y."/>
            <person name="Gao J."/>
            <person name="Yu F."/>
            <person name="Dong A."/>
            <person name="Shen W.H."/>
        </authorList>
    </citation>
    <scope>GENE FAMILY</scope>
    <scope>SUBUNIT</scope>
    <scope>SUBCELLULAR LOCATION</scope>
    <scope>DISRUPTION PHENOTYPE</scope>
    <scope>FUNCTION</scope>
    <scope>INTERACTION WITH HISTONE H2A</scope>
</reference>
<reference key="8">
    <citation type="journal article" date="2012" name="Plant Cell">
        <title>NAP1 family histone chaperones are required for somatic homologous recombination in Arabidopsis.</title>
        <authorList>
            <person name="Gao J."/>
            <person name="Zhu Y."/>
            <person name="Zhou W."/>
            <person name="Molinier J."/>
            <person name="Dong A."/>
            <person name="Shen W.H."/>
        </authorList>
    </citation>
    <scope>DISRUPTION PHENOTYPE</scope>
    <scope>FUNCTION</scope>
</reference>
<accession>Q94K07</accession>
<accession>Q9LTS5</accession>
<name>NAP1C_ARATH</name>
<comment type="function">
    <text evidence="1 7 8 9">May modulate chromatin structure by regulation of nucleosome assembly/disassembly (By similarity). May function in nucleotide excision repair (NER). Involved in somatic homologous recombination. Could be involved in response to abscisic acid (ABA) and to salt stress.</text>
</comment>
<comment type="subunit">
    <text evidence="7">Can form homomeric and heteromeric protein complexes with NAP1;1, NAP1;2 and NAP1;4. Binds histone H2A and associates with chromatin in vivo.</text>
</comment>
<comment type="interaction">
    <interactant intactId="EBI-4430887">
        <id>Q94K07</id>
    </interactant>
    <interactant intactId="EBI-4424361">
        <id>Q9SZI2</id>
        <label>NAP1;1</label>
    </interactant>
    <organismsDiffer>false</organismsDiffer>
    <experiments>4</experiments>
</comment>
<comment type="interaction">
    <interactant intactId="EBI-4430887">
        <id>Q94K07</id>
    </interactant>
    <interactant intactId="EBI-1997989">
        <id>Q9ZUP3</id>
        <label>NAP1;2</label>
    </interactant>
    <organismsDiffer>false</organismsDiffer>
    <experiments>5</experiments>
</comment>
<comment type="interaction">
    <interactant intactId="EBI-4430887">
        <id>Q94K07</id>
    </interactant>
    <interactant intactId="EBI-4430887">
        <id>Q94K07</id>
        <label>NAP1;3</label>
    </interactant>
    <organismsDiffer>false</organismsDiffer>
    <experiments>3</experiments>
</comment>
<comment type="interaction">
    <interactant intactId="EBI-4430887">
        <id>Q94K07</id>
    </interactant>
    <interactant intactId="EBI-6913300">
        <id>F4JEI8</id>
        <label>NAP1;4</label>
    </interactant>
    <organismsDiffer>false</organismsDiffer>
    <experiments>3</experiments>
</comment>
<comment type="subcellular location">
    <subcellularLocation>
        <location evidence="1">Nucleus</location>
    </subcellularLocation>
    <subcellularLocation>
        <location evidence="7">Cytoplasm</location>
    </subcellularLocation>
    <text>Predominantly located in cytoplasm.</text>
</comment>
<comment type="tissue specificity">
    <text evidence="6">Ubiquitous.</text>
</comment>
<comment type="domain">
    <text>The acidic domain is probably involved in the interaction with histones.</text>
</comment>
<comment type="disruption phenotype">
    <text evidence="7 8 9">No visible phenotype. Exhibits hyposensitive response to abscisic acid (ABA) with defects in stomata closure, and a decreased tolerance to salt stress.</text>
</comment>
<comment type="miscellaneous">
    <text evidence="11 12 13">Triple mutant nap1;1-nap1;2-nap1;3 has no obvious visible phenotype but exhibits hypersensitivity to DNA damage after UV-radiation, affected transcription of NER related genes (PubMed:19228338), slight hypersensitive response to abscisic acid (ABA) in seedling growth (PubMed:19825649) and impaired somatic homologous recombination (PubMed:22534127).</text>
</comment>
<comment type="similarity">
    <text evidence="10">Belongs to the nucleosome assembly protein (NAP) family.</text>
</comment>
<comment type="sequence caution" evidence="10">
    <conflict type="erroneous gene model prediction">
        <sequence resource="EMBL-CDS" id="BAA97025"/>
    </conflict>
</comment>
<feature type="chain" id="PRO_0000423680" description="Nucleosome assembly protein 1;3">
    <location>
        <begin position="1"/>
        <end position="371"/>
    </location>
</feature>
<feature type="propeptide" id="PRO_0000423681" description="Removed in mature form" evidence="2">
    <location>
        <begin position="372"/>
        <end position="374"/>
    </location>
</feature>
<feature type="region of interest" description="Disordered" evidence="5">
    <location>
        <begin position="299"/>
        <end position="374"/>
    </location>
</feature>
<feature type="coiled-coil region" evidence="4">
    <location>
        <begin position="26"/>
        <end position="80"/>
    </location>
</feature>
<feature type="short sequence motif" description="Nuclear export signal" evidence="4">
    <location>
        <begin position="47"/>
        <end position="62"/>
    </location>
</feature>
<feature type="short sequence motif" description="Nuclear localization signal" evidence="4">
    <location>
        <begin position="222"/>
        <end position="227"/>
    </location>
</feature>
<feature type="compositionally biased region" description="Acidic residues" evidence="5">
    <location>
        <begin position="299"/>
        <end position="339"/>
    </location>
</feature>
<feature type="compositionally biased region" description="Basic residues" evidence="5">
    <location>
        <begin position="343"/>
        <end position="355"/>
    </location>
</feature>
<feature type="compositionally biased region" description="Basic and acidic residues" evidence="5">
    <location>
        <begin position="364"/>
        <end position="374"/>
    </location>
</feature>
<feature type="modified residue" description="Phosphoserine" evidence="3">
    <location>
        <position position="41"/>
    </location>
</feature>
<feature type="modified residue" description="Cysteine methyl ester" evidence="2">
    <location>
        <position position="371"/>
    </location>
</feature>
<feature type="lipid moiety-binding region" description="S-farnesyl cysteine" evidence="2">
    <location>
        <position position="371"/>
    </location>
</feature>
<evidence type="ECO:0000250" key="1"/>
<evidence type="ECO:0000250" key="2">
    <source>
        <dbReference type="UniProtKB" id="Q9SZI2"/>
    </source>
</evidence>
<evidence type="ECO:0000250" key="3">
    <source>
        <dbReference type="UniProtKB" id="Q9ZUP3"/>
    </source>
</evidence>
<evidence type="ECO:0000255" key="4"/>
<evidence type="ECO:0000256" key="5">
    <source>
        <dbReference type="SAM" id="MobiDB-lite"/>
    </source>
</evidence>
<evidence type="ECO:0000269" key="6">
    <source>
    </source>
</evidence>
<evidence type="ECO:0000269" key="7">
    <source>
    </source>
</evidence>
<evidence type="ECO:0000269" key="8">
    <source>
    </source>
</evidence>
<evidence type="ECO:0000269" key="9">
    <source>
    </source>
</evidence>
<evidence type="ECO:0000305" key="10"/>
<evidence type="ECO:0000305" key="11">
    <source>
    </source>
</evidence>
<evidence type="ECO:0000305" key="12">
    <source>
    </source>
</evidence>
<evidence type="ECO:0000305" key="13">
    <source>
    </source>
</evidence>
<gene>
    <name type="primary">NAP1;3</name>
    <name type="synonym">NFA3</name>
    <name type="ordered locus">At5g56950</name>
    <name type="ORF">MHM17.6</name>
</gene>
<keyword id="KW-0143">Chaperone</keyword>
<keyword id="KW-0175">Coiled coil</keyword>
<keyword id="KW-0963">Cytoplasm</keyword>
<keyword id="KW-0449">Lipoprotein</keyword>
<keyword id="KW-0488">Methylation</keyword>
<keyword id="KW-0539">Nucleus</keyword>
<keyword id="KW-0597">Phosphoprotein</keyword>
<keyword id="KW-0636">Prenylation</keyword>
<keyword id="KW-1185">Reference proteome</keyword>
<sequence>MSNDKDSFNVSDLTSALKDEDRAGLVNALKNKLQNLAGQHSDVLENLTPKIRRRVEVLREIQGKHDEIETKFREERAALEAKYQKLYQPLYNKRYEIVNGATEVEGAPEDAKMDQGDEKTAEEKGVPSFWLTALKNNDVISEEITERDEGALIYLKDIKWCKIEEPKGFKLEFFFDQNPYFKNTLLTKAYHMIDEDEPLLEKAIGTEIDWYPGKCLTQKILKKKPKKGAKNAKPITKTEDCESFFNFFNPPQVPDDDEDIDEERAEELQNLMEQDYDIGSTIREKIIPHAVSWFTGEAIEGEEFEIDNDDEDDIDEDEDEDEEDEDEDEEEDDEDEEEEVSKTKKKPSVLHKKGGRPQVTDDQQGERPPECKQQ</sequence>
<organism>
    <name type="scientific">Arabidopsis thaliana</name>
    <name type="common">Mouse-ear cress</name>
    <dbReference type="NCBI Taxonomy" id="3702"/>
    <lineage>
        <taxon>Eukaryota</taxon>
        <taxon>Viridiplantae</taxon>
        <taxon>Streptophyta</taxon>
        <taxon>Embryophyta</taxon>
        <taxon>Tracheophyta</taxon>
        <taxon>Spermatophyta</taxon>
        <taxon>Magnoliopsida</taxon>
        <taxon>eudicotyledons</taxon>
        <taxon>Gunneridae</taxon>
        <taxon>Pentapetalae</taxon>
        <taxon>rosids</taxon>
        <taxon>malvids</taxon>
        <taxon>Brassicales</taxon>
        <taxon>Brassicaceae</taxon>
        <taxon>Camelineae</taxon>
        <taxon>Arabidopsis</taxon>
    </lineage>
</organism>
<proteinExistence type="evidence at protein level"/>
<dbReference type="EMBL" id="AB024035">
    <property type="protein sequence ID" value="BAA97025.1"/>
    <property type="status" value="ALT_SEQ"/>
    <property type="molecule type" value="Genomic_DNA"/>
</dbReference>
<dbReference type="EMBL" id="CP002688">
    <property type="protein sequence ID" value="AED96826.1"/>
    <property type="molecule type" value="Genomic_DNA"/>
</dbReference>
<dbReference type="EMBL" id="AF370487">
    <property type="protein sequence ID" value="AAK43864.1"/>
    <property type="molecule type" value="mRNA"/>
</dbReference>
<dbReference type="EMBL" id="AY064641">
    <property type="protein sequence ID" value="AAL47354.1"/>
    <property type="molecule type" value="mRNA"/>
</dbReference>
<dbReference type="RefSeq" id="NP_568844.1">
    <property type="nucleotide sequence ID" value="NM_125077.4"/>
</dbReference>
<dbReference type="SMR" id="Q94K07"/>
<dbReference type="BioGRID" id="21041">
    <property type="interactions" value="25"/>
</dbReference>
<dbReference type="FunCoup" id="Q94K07">
    <property type="interactions" value="3456"/>
</dbReference>
<dbReference type="IntAct" id="Q94K07">
    <property type="interactions" value="10"/>
</dbReference>
<dbReference type="STRING" id="3702.Q94K07"/>
<dbReference type="iPTMnet" id="Q94K07"/>
<dbReference type="PaxDb" id="3702-AT5G56950.1"/>
<dbReference type="ProteomicsDB" id="238525"/>
<dbReference type="EnsemblPlants" id="AT5G56950.1">
    <property type="protein sequence ID" value="AT5G56950.1"/>
    <property type="gene ID" value="AT5G56950"/>
</dbReference>
<dbReference type="GeneID" id="835797"/>
<dbReference type="Gramene" id="AT5G56950.1">
    <property type="protein sequence ID" value="AT5G56950.1"/>
    <property type="gene ID" value="AT5G56950"/>
</dbReference>
<dbReference type="KEGG" id="ath:AT5G56950"/>
<dbReference type="Araport" id="AT5G56950"/>
<dbReference type="TAIR" id="AT5G56950">
    <property type="gene designation" value="NAP1"/>
</dbReference>
<dbReference type="eggNOG" id="KOG1507">
    <property type="taxonomic scope" value="Eukaryota"/>
</dbReference>
<dbReference type="HOGENOM" id="CLU_038841_4_1_1"/>
<dbReference type="InParanoid" id="Q94K07"/>
<dbReference type="OMA" id="TNIEVRY"/>
<dbReference type="OrthoDB" id="27325at2759"/>
<dbReference type="PhylomeDB" id="Q94K07"/>
<dbReference type="CD-CODE" id="4299E36E">
    <property type="entry name" value="Nucleolus"/>
</dbReference>
<dbReference type="PRO" id="PR:Q94K07"/>
<dbReference type="Proteomes" id="UP000006548">
    <property type="component" value="Chromosome 5"/>
</dbReference>
<dbReference type="ExpressionAtlas" id="Q94K07">
    <property type="expression patterns" value="baseline and differential"/>
</dbReference>
<dbReference type="GO" id="GO:0005737">
    <property type="term" value="C:cytoplasm"/>
    <property type="evidence" value="ECO:0000314"/>
    <property type="project" value="TAIR"/>
</dbReference>
<dbReference type="GO" id="GO:0005634">
    <property type="term" value="C:nucleus"/>
    <property type="evidence" value="ECO:0000314"/>
    <property type="project" value="TAIR"/>
</dbReference>
<dbReference type="GO" id="GO:0009536">
    <property type="term" value="C:plastid"/>
    <property type="evidence" value="ECO:0007005"/>
    <property type="project" value="TAIR"/>
</dbReference>
<dbReference type="GO" id="GO:0003682">
    <property type="term" value="F:chromatin binding"/>
    <property type="evidence" value="ECO:0000314"/>
    <property type="project" value="UniProtKB"/>
</dbReference>
<dbReference type="GO" id="GO:0042393">
    <property type="term" value="F:histone binding"/>
    <property type="evidence" value="ECO:0000314"/>
    <property type="project" value="UniProtKB"/>
</dbReference>
<dbReference type="GO" id="GO:0042802">
    <property type="term" value="F:identical protein binding"/>
    <property type="evidence" value="ECO:0000353"/>
    <property type="project" value="IntAct"/>
</dbReference>
<dbReference type="GO" id="GO:0006281">
    <property type="term" value="P:DNA repair"/>
    <property type="evidence" value="ECO:0000316"/>
    <property type="project" value="TAIR"/>
</dbReference>
<dbReference type="GO" id="GO:0009294">
    <property type="term" value="P:DNA-mediated transformation"/>
    <property type="evidence" value="ECO:0000315"/>
    <property type="project" value="TAIR"/>
</dbReference>
<dbReference type="GO" id="GO:0000724">
    <property type="term" value="P:double-strand break repair via homologous recombination"/>
    <property type="evidence" value="ECO:0000316"/>
    <property type="project" value="TAIR"/>
</dbReference>
<dbReference type="GO" id="GO:0006334">
    <property type="term" value="P:nucleosome assembly"/>
    <property type="evidence" value="ECO:0007669"/>
    <property type="project" value="InterPro"/>
</dbReference>
<dbReference type="GO" id="GO:0016444">
    <property type="term" value="P:somatic cell DNA recombination"/>
    <property type="evidence" value="ECO:0000315"/>
    <property type="project" value="UniProtKB"/>
</dbReference>
<dbReference type="FunFam" id="1.20.5.1500:FF:000001">
    <property type="entry name" value="Nucleosome assembly protein 1-like 1"/>
    <property type="match status" value="1"/>
</dbReference>
<dbReference type="FunFam" id="3.30.1120.90:FF:000005">
    <property type="entry name" value="Nucleosome assembly protein11"/>
    <property type="match status" value="1"/>
</dbReference>
<dbReference type="Gene3D" id="1.20.5.1500">
    <property type="match status" value="1"/>
</dbReference>
<dbReference type="Gene3D" id="3.30.1120.90">
    <property type="entry name" value="Nucleosome assembly protein"/>
    <property type="match status" value="1"/>
</dbReference>
<dbReference type="InterPro" id="IPR037231">
    <property type="entry name" value="NAP-like_sf"/>
</dbReference>
<dbReference type="InterPro" id="IPR002164">
    <property type="entry name" value="NAP_family"/>
</dbReference>
<dbReference type="PANTHER" id="PTHR11875">
    <property type="entry name" value="TESTIS-SPECIFIC Y-ENCODED PROTEIN"/>
    <property type="match status" value="1"/>
</dbReference>
<dbReference type="Pfam" id="PF00956">
    <property type="entry name" value="NAP"/>
    <property type="match status" value="1"/>
</dbReference>
<dbReference type="SUPFAM" id="SSF143113">
    <property type="entry name" value="NAP-like"/>
    <property type="match status" value="1"/>
</dbReference>
<protein>
    <recommendedName>
        <fullName>Nucleosome assembly protein 1;3</fullName>
        <shortName>AtNAP1;3</shortName>
    </recommendedName>
    <alternativeName>
        <fullName>Nucleosome/chromatin assembly factor group A3</fullName>
    </alternativeName>
</protein>